<evidence type="ECO:0000255" key="1">
    <source>
        <dbReference type="HAMAP-Rule" id="MF_00449"/>
    </source>
</evidence>
<proteinExistence type="inferred from homology"/>
<reference key="1">
    <citation type="journal article" date="2000" name="Nature">
        <title>The genome sequence of the thermoacidophilic scavenger Thermoplasma acidophilum.</title>
        <authorList>
            <person name="Ruepp A."/>
            <person name="Graml W."/>
            <person name="Santos-Martinez M.-L."/>
            <person name="Koretke K.K."/>
            <person name="Volker C."/>
            <person name="Mewes H.-W."/>
            <person name="Frishman D."/>
            <person name="Stocker S."/>
            <person name="Lupas A.N."/>
            <person name="Baumeister W."/>
        </authorList>
    </citation>
    <scope>NUCLEOTIDE SEQUENCE [LARGE SCALE GENOMIC DNA]</scope>
    <source>
        <strain>ATCC 25905 / DSM 1728 / JCM 9062 / NBRC 15155 / AMRC-C165</strain>
    </source>
</reference>
<keyword id="KW-0067">ATP-binding</keyword>
<keyword id="KW-0175">Coiled coil</keyword>
<keyword id="KW-0227">DNA damage</keyword>
<keyword id="KW-0234">DNA repair</keyword>
<keyword id="KW-0378">Hydrolase</keyword>
<keyword id="KW-0479">Metal-binding</keyword>
<keyword id="KW-0547">Nucleotide-binding</keyword>
<keyword id="KW-1185">Reference proteome</keyword>
<keyword id="KW-0862">Zinc</keyword>
<name>RAD50_THEAC</name>
<comment type="function">
    <text evidence="1">Part of the Rad50/Mre11 complex, which is involved in the early steps of DNA double-strand break (DSB) repair. The complex may facilitate opening of the processed DNA ends to aid in the recruitment of HerA and NurA. Rad50 controls the balance between DNA end bridging and DNA resection via ATP-dependent structural rearrangements of the Rad50/Mre11 complex.</text>
</comment>
<comment type="cofactor">
    <cofactor evidence="1">
        <name>Zn(2+)</name>
        <dbReference type="ChEBI" id="CHEBI:29105"/>
    </cofactor>
    <text evidence="1">Binds 1 zinc ion per homodimer.</text>
</comment>
<comment type="subunit">
    <text evidence="1">Homodimer. Forms a heterotetramer composed of two Mre11 subunits and two Rad50 subunits.</text>
</comment>
<comment type="domain">
    <text evidence="1">The two conserved Cys that bind zinc constitute the zinc-hook, which separates the large intramolecular coiled coil regions. The 2 Cys residues coordinate one molecule of zinc with the help of the 2 Cys residues of the zinc-hook of another Rad50 molecule, thereby forming a V-shaped homodimer.</text>
</comment>
<comment type="similarity">
    <text evidence="1">Belongs to the SMC family. RAD50 subfamily.</text>
</comment>
<accession>Q9HLR8</accession>
<dbReference type="EMBL" id="AL445063">
    <property type="protein sequence ID" value="CAC11304.1"/>
    <property type="molecule type" value="Genomic_DNA"/>
</dbReference>
<dbReference type="RefSeq" id="WP_010900584.1">
    <property type="nucleotide sequence ID" value="NC_002578.1"/>
</dbReference>
<dbReference type="SMR" id="Q9HLR8"/>
<dbReference type="STRING" id="273075.gene:9571372"/>
<dbReference type="PaxDb" id="273075-Ta0157"/>
<dbReference type="EnsemblBacteria" id="CAC11304">
    <property type="protein sequence ID" value="CAC11304"/>
    <property type="gene ID" value="CAC11304"/>
</dbReference>
<dbReference type="KEGG" id="tac:Ta0157"/>
<dbReference type="eggNOG" id="arCOG00368">
    <property type="taxonomic scope" value="Archaea"/>
</dbReference>
<dbReference type="HOGENOM" id="CLU_004785_0_2_2"/>
<dbReference type="InParanoid" id="Q9HLR8"/>
<dbReference type="OrthoDB" id="25344at2157"/>
<dbReference type="Proteomes" id="UP000001024">
    <property type="component" value="Chromosome"/>
</dbReference>
<dbReference type="GO" id="GO:0005524">
    <property type="term" value="F:ATP binding"/>
    <property type="evidence" value="ECO:0007669"/>
    <property type="project" value="UniProtKB-UniRule"/>
</dbReference>
<dbReference type="GO" id="GO:0016887">
    <property type="term" value="F:ATP hydrolysis activity"/>
    <property type="evidence" value="ECO:0007669"/>
    <property type="project" value="UniProtKB-UniRule"/>
</dbReference>
<dbReference type="GO" id="GO:0008270">
    <property type="term" value="F:zinc ion binding"/>
    <property type="evidence" value="ECO:0007669"/>
    <property type="project" value="UniProtKB-UniRule"/>
</dbReference>
<dbReference type="GO" id="GO:0006302">
    <property type="term" value="P:double-strand break repair"/>
    <property type="evidence" value="ECO:0007669"/>
    <property type="project" value="UniProtKB-UniRule"/>
</dbReference>
<dbReference type="Gene3D" id="1.10.287.510">
    <property type="entry name" value="Helix hairpin bin"/>
    <property type="match status" value="1"/>
</dbReference>
<dbReference type="Gene3D" id="3.40.50.300">
    <property type="entry name" value="P-loop containing nucleotide triphosphate hydrolases"/>
    <property type="match status" value="2"/>
</dbReference>
<dbReference type="HAMAP" id="MF_00449">
    <property type="entry name" value="RAD50"/>
    <property type="match status" value="1"/>
</dbReference>
<dbReference type="InterPro" id="IPR027417">
    <property type="entry name" value="P-loop_NTPase"/>
</dbReference>
<dbReference type="InterPro" id="IPR022982">
    <property type="entry name" value="Rad50_ATPase_archaeal"/>
</dbReference>
<dbReference type="InterPro" id="IPR003395">
    <property type="entry name" value="RecF/RecN/SMC_N"/>
</dbReference>
<dbReference type="InterPro" id="IPR013134">
    <property type="entry name" value="Zn_hook_RAD50"/>
</dbReference>
<dbReference type="NCBIfam" id="NF002244">
    <property type="entry name" value="PRK01156.1"/>
    <property type="match status" value="1"/>
</dbReference>
<dbReference type="PANTHER" id="PTHR32114">
    <property type="entry name" value="ABC TRANSPORTER ABCH.3"/>
    <property type="match status" value="1"/>
</dbReference>
<dbReference type="PANTHER" id="PTHR32114:SF2">
    <property type="entry name" value="ABC TRANSPORTER ABCH.3"/>
    <property type="match status" value="1"/>
</dbReference>
<dbReference type="Pfam" id="PF04423">
    <property type="entry name" value="Rad50_zn_hook"/>
    <property type="match status" value="1"/>
</dbReference>
<dbReference type="Pfam" id="PF02463">
    <property type="entry name" value="SMC_N"/>
    <property type="match status" value="1"/>
</dbReference>
<dbReference type="SUPFAM" id="SSF52540">
    <property type="entry name" value="P-loop containing nucleoside triphosphate hydrolases"/>
    <property type="match status" value="1"/>
</dbReference>
<dbReference type="SUPFAM" id="SSF75712">
    <property type="entry name" value="Rad50 coiled-coil Zn hook"/>
    <property type="match status" value="1"/>
</dbReference>
<dbReference type="PROSITE" id="PS51131">
    <property type="entry name" value="ZN_HOOK"/>
    <property type="match status" value="1"/>
</dbReference>
<gene>
    <name evidence="1" type="primary">rad50</name>
    <name type="ordered locus">Ta0157</name>
</gene>
<sequence length="896" mass="103436">MIIDRIRLINFLSHEDSEIFFDTGVNIIVGHNGAGKSSIIDAIRFALFGDKRTKKIEDMIRKGAKSLEVEMEFRHGGHTYIIRRSITRRSKNPESNAMIMVDGSALSQSVKDANDYIEKNIITKSKDVFLNSVFSKQGEMDDLISGDPARRKKLLDEILEIEKLEETYDVLKDVIDSLQAGISNLDYLISENERDRDDLRRYQDDVAELSKQIDQEEAIESDLLRKKEEASAEYNAVSKELIMLDATLKNMMSLSDEANRYEEEIRKIDGKLQEISGSTERYNEITSSKVYASRERIRGYWTDKGQIIDYRKMLKNIDGQVQSYEDNMKKAAELQADHDQYEIMQRRMDEIKHELDDLRTYESKYVSLINEIEQKKKKREEYRKKQKDLGDEISRTLGRAFANASELVAIYEEIRRDIDEINTDLGNLQVKIGALRQKEEEIRRNMNMLEGHNKCPVCGTDLGDEGSRRIREHYSEDLNRLNEEIDHLEREASAIDEKKRQLISMESYLAKGKIREYETYDRQMKDLEAQITDDENSLSTIAYKHTKYEQLDEEYRSMHLEDLRQKYTDWNNAMAVISNIGDIEALRKQKDEVSKKLKDAEDRTHEIESEFPDINSYTPSYIGKIEDEVRLLEPQIKLAEDLKRQRETLREKVKDLRSRSAGMDEIQKRKNELSVKASESETRLKYVEGQIQATLSSLSGKRSKVETLRSHVSEIEQRISDRERDIERMKKIEKAINDVKRIREAFGKNGVPAMIRQSVSDYLTAKTRDYLSSFDLDFDDISVDQDFNVTVYRGGVPEGIDSLSGGEKTAVAFAIRVAVAQFLNADLSLLILDEPTAFLDEERRNSLSDIIEYTLKDSSVIPQVIIISHHRELLASANVAIEVKKIGGRSVVSNAD</sequence>
<organism>
    <name type="scientific">Thermoplasma acidophilum (strain ATCC 25905 / DSM 1728 / JCM 9062 / NBRC 15155 / AMRC-C165)</name>
    <dbReference type="NCBI Taxonomy" id="273075"/>
    <lineage>
        <taxon>Archaea</taxon>
        <taxon>Methanobacteriati</taxon>
        <taxon>Thermoplasmatota</taxon>
        <taxon>Thermoplasmata</taxon>
        <taxon>Thermoplasmatales</taxon>
        <taxon>Thermoplasmataceae</taxon>
        <taxon>Thermoplasma</taxon>
    </lineage>
</organism>
<protein>
    <recommendedName>
        <fullName evidence="1">DNA double-strand break repair Rad50 ATPase</fullName>
    </recommendedName>
</protein>
<feature type="chain" id="PRO_0000138667" description="DNA double-strand break repair Rad50 ATPase">
    <location>
        <begin position="1"/>
        <end position="896"/>
    </location>
</feature>
<feature type="domain" description="Zinc-hook" evidence="1">
    <location>
        <begin position="411"/>
        <end position="507"/>
    </location>
</feature>
<feature type="coiled-coil region" evidence="1">
    <location>
        <begin position="200"/>
        <end position="274"/>
    </location>
</feature>
<feature type="coiled-coil region" evidence="1">
    <location>
        <begin position="412"/>
        <end position="505"/>
    </location>
</feature>
<feature type="coiled-coil region" evidence="1">
    <location>
        <begin position="580"/>
        <end position="611"/>
    </location>
</feature>
<feature type="coiled-coil region" evidence="1">
    <location>
        <begin position="636"/>
        <end position="669"/>
    </location>
</feature>
<feature type="coiled-coil region" evidence="1">
    <location>
        <begin position="702"/>
        <end position="731"/>
    </location>
</feature>
<feature type="binding site" evidence="1">
    <location>
        <begin position="32"/>
        <end position="38"/>
    </location>
    <ligand>
        <name>ATP</name>
        <dbReference type="ChEBI" id="CHEBI:30616"/>
    </ligand>
</feature>
<feature type="binding site" evidence="1">
    <location>
        <position position="137"/>
    </location>
    <ligand>
        <name>ATP</name>
        <dbReference type="ChEBI" id="CHEBI:30616"/>
    </ligand>
</feature>
<feature type="binding site" evidence="1">
    <location>
        <position position="455"/>
    </location>
    <ligand>
        <name>Zn(2+)</name>
        <dbReference type="ChEBI" id="CHEBI:29105"/>
    </ligand>
</feature>
<feature type="binding site" evidence="1">
    <location>
        <position position="458"/>
    </location>
    <ligand>
        <name>Zn(2+)</name>
        <dbReference type="ChEBI" id="CHEBI:29105"/>
    </ligand>
</feature>